<gene>
    <name type="primary">Rgs22</name>
</gene>
<reference key="1">
    <citation type="journal article" date="2009" name="PLoS Biol.">
        <title>Lineage-specific biology revealed by a finished genome assembly of the mouse.</title>
        <authorList>
            <person name="Church D.M."/>
            <person name="Goodstadt L."/>
            <person name="Hillier L.W."/>
            <person name="Zody M.C."/>
            <person name="Goldstein S."/>
            <person name="She X."/>
            <person name="Bult C.J."/>
            <person name="Agarwala R."/>
            <person name="Cherry J.L."/>
            <person name="DiCuccio M."/>
            <person name="Hlavina W."/>
            <person name="Kapustin Y."/>
            <person name="Meric P."/>
            <person name="Maglott D."/>
            <person name="Birtle Z."/>
            <person name="Marques A.C."/>
            <person name="Graves T."/>
            <person name="Zhou S."/>
            <person name="Teague B."/>
            <person name="Potamousis K."/>
            <person name="Churas C."/>
            <person name="Place M."/>
            <person name="Herschleb J."/>
            <person name="Runnheim R."/>
            <person name="Forrest D."/>
            <person name="Amos-Landgraf J."/>
            <person name="Schwartz D.C."/>
            <person name="Cheng Z."/>
            <person name="Lindblad-Toh K."/>
            <person name="Eichler E.E."/>
            <person name="Ponting C.P."/>
        </authorList>
    </citation>
    <scope>NUCLEOTIDE SEQUENCE [LARGE SCALE GENOMIC DNA]</scope>
    <source>
        <strain>C57BL/6J</strain>
    </source>
</reference>
<reference key="2">
    <citation type="journal article" date="2008" name="Biol. Reprod.">
        <title>RGS22, a novel testis-specific regulator of G-protein signaling involved in human and mouse spermiogenesis along with GNA12/13 subunits.</title>
        <authorList>
            <person name="Hu Y."/>
            <person name="Xing J."/>
            <person name="Chen L."/>
            <person name="Guo X."/>
            <person name="Du Y."/>
            <person name="Zhao C."/>
            <person name="Zhu Y."/>
            <person name="Lin M."/>
            <person name="Zhou Z."/>
            <person name="Sha J."/>
        </authorList>
    </citation>
    <scope>SUBCELLULAR LOCATION</scope>
    <scope>TISSUE SPECIFICITY</scope>
    <source>
        <tissue>Testis</tissue>
    </source>
</reference>
<reference key="3">
    <citation type="journal article" date="2010" name="Cell">
        <title>A tissue-specific atlas of mouse protein phosphorylation and expression.</title>
        <authorList>
            <person name="Huttlin E.L."/>
            <person name="Jedrychowski M.P."/>
            <person name="Elias J.E."/>
            <person name="Goswami T."/>
            <person name="Rad R."/>
            <person name="Beausoleil S.A."/>
            <person name="Villen J."/>
            <person name="Haas W."/>
            <person name="Sowa M.E."/>
            <person name="Gygi S.P."/>
        </authorList>
    </citation>
    <scope>IDENTIFICATION BY MASS SPECTROMETRY [LARGE SCALE ANALYSIS]</scope>
    <source>
        <tissue>Testis</tissue>
    </source>
</reference>
<dbReference type="EMBL" id="AC121577">
    <property type="status" value="NOT_ANNOTATED_CDS"/>
    <property type="molecule type" value="Genomic_DNA"/>
</dbReference>
<dbReference type="EMBL" id="AC157521">
    <property type="status" value="NOT_ANNOTATED_CDS"/>
    <property type="molecule type" value="Genomic_DNA"/>
</dbReference>
<dbReference type="EMBL" id="AC166820">
    <property type="status" value="NOT_ANNOTATED_CDS"/>
    <property type="molecule type" value="Genomic_DNA"/>
</dbReference>
<dbReference type="CCDS" id="CCDS56979.1"/>
<dbReference type="RefSeq" id="NP_001182677.1">
    <property type="nucleotide sequence ID" value="NM_001195748.1"/>
</dbReference>
<dbReference type="RefSeq" id="XP_011243672.1">
    <property type="nucleotide sequence ID" value="XM_011245370.4"/>
</dbReference>
<dbReference type="RefSeq" id="XP_011243673.1">
    <property type="nucleotide sequence ID" value="XM_011245371.4"/>
</dbReference>
<dbReference type="RefSeq" id="XP_011243674.1">
    <property type="nucleotide sequence ID" value="XM_011245372.4"/>
</dbReference>
<dbReference type="RefSeq" id="XP_011243675.1">
    <property type="nucleotide sequence ID" value="XM_011245373.4"/>
</dbReference>
<dbReference type="SMR" id="G3UYX5"/>
<dbReference type="BioGRID" id="552756">
    <property type="interactions" value="2"/>
</dbReference>
<dbReference type="FunCoup" id="G3UYX5">
    <property type="interactions" value="1092"/>
</dbReference>
<dbReference type="STRING" id="10090.ENSMUSP00000134259"/>
<dbReference type="iPTMnet" id="G3UYX5"/>
<dbReference type="PhosphoSitePlus" id="G3UYX5"/>
<dbReference type="PaxDb" id="10090-ENSMUSP00000134259"/>
<dbReference type="ProteomicsDB" id="255193"/>
<dbReference type="Antibodypedia" id="6845">
    <property type="antibodies" value="150 antibodies from 28 providers"/>
</dbReference>
<dbReference type="Ensembl" id="ENSMUST00000172831.8">
    <property type="protein sequence ID" value="ENSMUSP00000134259.2"/>
    <property type="gene ID" value="ENSMUSG00000037627.17"/>
</dbReference>
<dbReference type="GeneID" id="626596"/>
<dbReference type="KEGG" id="mmu:626596"/>
<dbReference type="UCSC" id="uc011zsd.1">
    <property type="organism name" value="mouse"/>
</dbReference>
<dbReference type="AGR" id="MGI:3613651"/>
<dbReference type="CTD" id="26166"/>
<dbReference type="MGI" id="MGI:3613651">
    <property type="gene designation" value="Rgs22"/>
</dbReference>
<dbReference type="VEuPathDB" id="HostDB:ENSMUSG00000037627"/>
<dbReference type="eggNOG" id="ENOG502QU18">
    <property type="taxonomic scope" value="Eukaryota"/>
</dbReference>
<dbReference type="GeneTree" id="ENSGT00500000044936"/>
<dbReference type="HOGENOM" id="CLU_005031_0_0_1"/>
<dbReference type="InParanoid" id="G3UYX5"/>
<dbReference type="OMA" id="LMRSWYL"/>
<dbReference type="OrthoDB" id="10013157at2759"/>
<dbReference type="PhylomeDB" id="G3UYX5"/>
<dbReference type="TreeFam" id="TF329128"/>
<dbReference type="BioGRID-ORCS" id="626596">
    <property type="hits" value="0 hits in 77 CRISPR screens"/>
</dbReference>
<dbReference type="ChiTaRS" id="Rgs22">
    <property type="organism name" value="mouse"/>
</dbReference>
<dbReference type="PRO" id="PR:G3UYX5"/>
<dbReference type="Proteomes" id="UP000000589">
    <property type="component" value="Chromosome 15"/>
</dbReference>
<dbReference type="RNAct" id="G3UYX5">
    <property type="molecule type" value="protein"/>
</dbReference>
<dbReference type="Bgee" id="ENSMUSG00000037627">
    <property type="expression patterns" value="Expressed in spermatid and 41 other cell types or tissues"/>
</dbReference>
<dbReference type="ExpressionAtlas" id="G3UYX5">
    <property type="expression patterns" value="baseline and differential"/>
</dbReference>
<dbReference type="GO" id="GO:0015629">
    <property type="term" value="C:actin cytoskeleton"/>
    <property type="evidence" value="ECO:0007669"/>
    <property type="project" value="Ensembl"/>
</dbReference>
<dbReference type="GO" id="GO:0005737">
    <property type="term" value="C:cytoplasm"/>
    <property type="evidence" value="ECO:0000314"/>
    <property type="project" value="MGI"/>
</dbReference>
<dbReference type="GO" id="GO:0005829">
    <property type="term" value="C:cytosol"/>
    <property type="evidence" value="ECO:0007669"/>
    <property type="project" value="Ensembl"/>
</dbReference>
<dbReference type="GO" id="GO:0001650">
    <property type="term" value="C:fibrillar center"/>
    <property type="evidence" value="ECO:0007669"/>
    <property type="project" value="Ensembl"/>
</dbReference>
<dbReference type="GO" id="GO:0001673">
    <property type="term" value="C:male germ cell nucleus"/>
    <property type="evidence" value="ECO:0000266"/>
    <property type="project" value="MGI"/>
</dbReference>
<dbReference type="GO" id="GO:0005634">
    <property type="term" value="C:nucleus"/>
    <property type="evidence" value="ECO:0000314"/>
    <property type="project" value="MGI"/>
</dbReference>
<dbReference type="GO" id="GO:0001965">
    <property type="term" value="F:G-protein alpha-subunit binding"/>
    <property type="evidence" value="ECO:0000266"/>
    <property type="project" value="MGI"/>
</dbReference>
<dbReference type="GO" id="GO:0009968">
    <property type="term" value="P:negative regulation of signal transduction"/>
    <property type="evidence" value="ECO:0007669"/>
    <property type="project" value="UniProtKB-KW"/>
</dbReference>
<dbReference type="CDD" id="cd08727">
    <property type="entry name" value="RGS_RGS22_2"/>
    <property type="match status" value="1"/>
</dbReference>
<dbReference type="CDD" id="cd08726">
    <property type="entry name" value="RGS_RGS22_3"/>
    <property type="match status" value="1"/>
</dbReference>
<dbReference type="CDD" id="cd08725">
    <property type="entry name" value="RGS_RGS22_4"/>
    <property type="match status" value="1"/>
</dbReference>
<dbReference type="FunFam" id="1.10.167.10:FF:000011">
    <property type="entry name" value="Regulator of G protein signaling 22"/>
    <property type="match status" value="1"/>
</dbReference>
<dbReference type="FunFam" id="1.10.167.10:FF:000016">
    <property type="entry name" value="Regulator of G protein signaling 22"/>
    <property type="match status" value="1"/>
</dbReference>
<dbReference type="FunFam" id="1.10.167.10:FF:000020">
    <property type="entry name" value="Regulator of G protein signaling 22"/>
    <property type="match status" value="1"/>
</dbReference>
<dbReference type="Gene3D" id="1.10.167.10">
    <property type="entry name" value="Regulator of G-protein Signalling 4, domain 2"/>
    <property type="match status" value="4"/>
</dbReference>
<dbReference type="InterPro" id="IPR016137">
    <property type="entry name" value="RGS"/>
</dbReference>
<dbReference type="InterPro" id="IPR042651">
    <property type="entry name" value="Rgs22"/>
</dbReference>
<dbReference type="InterPro" id="IPR048074">
    <property type="entry name" value="RGS22_RGS_fourth"/>
</dbReference>
<dbReference type="InterPro" id="IPR048075">
    <property type="entry name" value="RGS22_RGS_second"/>
</dbReference>
<dbReference type="InterPro" id="IPR048073">
    <property type="entry name" value="RGS22_RGS_third"/>
</dbReference>
<dbReference type="InterPro" id="IPR036305">
    <property type="entry name" value="RGS_sf"/>
</dbReference>
<dbReference type="InterPro" id="IPR044926">
    <property type="entry name" value="RGS_subdomain_2"/>
</dbReference>
<dbReference type="PANTHER" id="PTHR46583">
    <property type="entry name" value="REGULATOR OF G-PROTEIN SIGNALING 22"/>
    <property type="match status" value="1"/>
</dbReference>
<dbReference type="PANTHER" id="PTHR46583:SF1">
    <property type="entry name" value="REGULATOR OF G-PROTEIN SIGNALING 22"/>
    <property type="match status" value="1"/>
</dbReference>
<dbReference type="Pfam" id="PF00615">
    <property type="entry name" value="RGS"/>
    <property type="match status" value="2"/>
</dbReference>
<dbReference type="SMART" id="SM00315">
    <property type="entry name" value="RGS"/>
    <property type="match status" value="2"/>
</dbReference>
<dbReference type="SUPFAM" id="SSF48097">
    <property type="entry name" value="Regulator of G-protein signaling, RGS"/>
    <property type="match status" value="4"/>
</dbReference>
<dbReference type="PROSITE" id="PS50132">
    <property type="entry name" value="RGS"/>
    <property type="match status" value="2"/>
</dbReference>
<keyword id="KW-0175">Coiled coil</keyword>
<keyword id="KW-0963">Cytoplasm</keyword>
<keyword id="KW-0539">Nucleus</keyword>
<keyword id="KW-1185">Reference proteome</keyword>
<keyword id="KW-0677">Repeat</keyword>
<keyword id="KW-0734">Signal transduction inhibitor</keyword>
<comment type="function">
    <text evidence="1">Inhibits signal transduction by increasing the GTPase activity of G protein alpha subunits thereby driving them into their inactive GDP-bound form.</text>
</comment>
<comment type="subunit">
    <text evidence="1">Interacts with GNA11, GNA12 and GNA13.</text>
</comment>
<comment type="subcellular location">
    <subcellularLocation>
        <location evidence="4">Cytoplasm</location>
    </subcellularLocation>
    <subcellularLocation>
        <location evidence="4">Nucleus</location>
    </subcellularLocation>
    <text>Expressed in the cytoplasm of spermatogonia and spermatocytes. In spermatids, also expressed in the nucleus.</text>
</comment>
<comment type="tissue specificity">
    <text evidence="4">Expressed testis, including in Leydig cells and spermatogenic cells from the spermatogonia to spermatid stages (at protein level).</text>
</comment>
<protein>
    <recommendedName>
        <fullName>Regulator of G-protein signaling 22</fullName>
    </recommendedName>
</protein>
<organism>
    <name type="scientific">Mus musculus</name>
    <name type="common">Mouse</name>
    <dbReference type="NCBI Taxonomy" id="10090"/>
    <lineage>
        <taxon>Eukaryota</taxon>
        <taxon>Metazoa</taxon>
        <taxon>Chordata</taxon>
        <taxon>Craniata</taxon>
        <taxon>Vertebrata</taxon>
        <taxon>Euteleostomi</taxon>
        <taxon>Mammalia</taxon>
        <taxon>Eutheria</taxon>
        <taxon>Euarchontoglires</taxon>
        <taxon>Glires</taxon>
        <taxon>Rodentia</taxon>
        <taxon>Myomorpha</taxon>
        <taxon>Muroidea</taxon>
        <taxon>Muridae</taxon>
        <taxon>Murinae</taxon>
        <taxon>Mus</taxon>
        <taxon>Mus</taxon>
    </lineage>
</organism>
<name>RGS22_MOUSE</name>
<evidence type="ECO:0000250" key="1"/>
<evidence type="ECO:0000255" key="2">
    <source>
        <dbReference type="PROSITE-ProRule" id="PRU00171"/>
    </source>
</evidence>
<evidence type="ECO:0000256" key="3">
    <source>
        <dbReference type="SAM" id="MobiDB-lite"/>
    </source>
</evidence>
<evidence type="ECO:0000269" key="4">
    <source>
    </source>
</evidence>
<feature type="chain" id="PRO_0000428676" description="Regulator of G-protein signaling 22">
    <location>
        <begin position="1"/>
        <end position="1258"/>
    </location>
</feature>
<feature type="domain" description="RGS 1" evidence="2">
    <location>
        <begin position="845"/>
        <end position="973"/>
    </location>
</feature>
<feature type="domain" description="RGS 2" evidence="2">
    <location>
        <begin position="1014"/>
        <end position="1138"/>
    </location>
</feature>
<feature type="region of interest" description="Disordered" evidence="3">
    <location>
        <begin position="581"/>
        <end position="604"/>
    </location>
</feature>
<feature type="region of interest" description="Disordered" evidence="3">
    <location>
        <begin position="1145"/>
        <end position="1172"/>
    </location>
</feature>
<feature type="compositionally biased region" description="Basic and acidic residues" evidence="3">
    <location>
        <begin position="1154"/>
        <end position="1164"/>
    </location>
</feature>
<sequence length="1258" mass="145883">MPEKRLSAEPPEVTEEEFENYLATDNFLVDYFNEFLSLPTFPEAIRFNVDYGVFEVVNDAPQLLEKQLKKILQNQQPRNPIYDVVRKGKSDSKSTQKSVPCEDEAINVNYSIMCLKREQGINWIKRERLPAFLESDCYFEYRLAKLISQATWSSTGMNFIVGTNFTPWILRRPPAPPPPSTDEDNYMIMKKFYVSLGQASYTQTKDWFTLAKESENTVTMASLPCCIPHHQTASPVIATASEIFDDGVHPRTIKSLSKSSKAVSELDEEEEGSISMKDSPSQALLRVYLEKKGGKERNLTLHFSSVEEFLDAYIIFILREAIQHITGQSLSDTPEYINYYKVSHVIFDKVPPVPSNKAIVSPPVEMVEEISKDRLENVSLSSESESIGPESRADWCISHRTYDIGNRREFERFKKFLKGTLGERYWWLWMDIERLKVLKDPERHQRHLEKMKKCYLVSSGERYLSAEILSKFKLLHGSRWTADHLKNIQAEVLKPLLLYWAPRFCVTHSASAKNASTELKFWRLRQEKPRKDVDPFPQMATLLPLRPKSCIPQTPEVQGEEINLFQPSKFKKLSKINAGTQQLGRSEPLNAVSSKDGGLEKGSKRLPESTTVVRLTSFTDISECLKPQLERKYTYTEEHNVKTVSNVGALGGFDMENLLQSLYVENRAGFFFTKFCENSGNKLWKHSVYFWFDLQAYHQLFYQETLQPFKVCKQAQYLFATYIAPSASFDIGLHQEGKKDIYMKIQPPFEDLFDTAEEFILLSLLEPWTQMVMSDKMAYKKVELQEETRQLDSACFRKLHALHKETISKKAEDTTGYAMAKLSLSDVSKQTEYWLNVPEGYKHFTFTDLLNNKLEFEHFRQFLESHSSSLDLMCWIDIEQFRRIIFKDQKQREEKSIYIKNKYLNKKYFFGPRSPASLHQQNQIMLLSGGWGRILHEQLDASVLVEIQKHVLNRLENVWLPLFLSSEQFASRQKIKTQMKDIADELLLQRHDRKIGVWKPVESKWISSSCEIIAFRKALLNPVIARQFQRFVALKGDLLENGVLFWQEVQKFKDLCHSHCDESIIHKKITTIINCFINSYIPPALQIDIPVEQAQKILEHRKELGPYVFREAQMTIFGVLFKFWPQFCEFRKNLTDEKIMSVLERRQEHKQKRKASDTEEDKAGKSGVKQYASTTGSLTKPVLGSESLLVLQSYGRQPTWCYSKYIEALEQERILLKIQEEVERKMFTGTSSFTNLLKPSTGSALSLKKNVSLHSIQR</sequence>
<proteinExistence type="evidence at protein level"/>
<accession>G3UYX5</accession>